<organism>
    <name type="scientific">Chlorobium phaeobacteroides (strain BS1)</name>
    <dbReference type="NCBI Taxonomy" id="331678"/>
    <lineage>
        <taxon>Bacteria</taxon>
        <taxon>Pseudomonadati</taxon>
        <taxon>Chlorobiota</taxon>
        <taxon>Chlorobiia</taxon>
        <taxon>Chlorobiales</taxon>
        <taxon>Chlorobiaceae</taxon>
        <taxon>Chlorobium/Pelodictyon group</taxon>
        <taxon>Chlorobium</taxon>
    </lineage>
</organism>
<feature type="chain" id="PRO_1000121093" description="DNA replication and repair protein RecF">
    <location>
        <begin position="1"/>
        <end position="363"/>
    </location>
</feature>
<feature type="binding site" evidence="1">
    <location>
        <begin position="30"/>
        <end position="37"/>
    </location>
    <ligand>
        <name>ATP</name>
        <dbReference type="ChEBI" id="CHEBI:30616"/>
    </ligand>
</feature>
<comment type="function">
    <text evidence="1">The RecF protein is involved in DNA metabolism; it is required for DNA replication and normal SOS inducibility. RecF binds preferentially to single-stranded, linear DNA. It also seems to bind ATP.</text>
</comment>
<comment type="subcellular location">
    <subcellularLocation>
        <location evidence="1">Cytoplasm</location>
    </subcellularLocation>
</comment>
<comment type="similarity">
    <text evidence="1">Belongs to the RecF family.</text>
</comment>
<gene>
    <name evidence="1" type="primary">recF</name>
    <name type="ordered locus">Cphamn1_0003</name>
</gene>
<dbReference type="EMBL" id="CP001101">
    <property type="protein sequence ID" value="ACE02992.1"/>
    <property type="molecule type" value="Genomic_DNA"/>
</dbReference>
<dbReference type="SMR" id="B3EJI1"/>
<dbReference type="STRING" id="331678.Cphamn1_0003"/>
<dbReference type="KEGG" id="cpb:Cphamn1_0003"/>
<dbReference type="eggNOG" id="COG1195">
    <property type="taxonomic scope" value="Bacteria"/>
</dbReference>
<dbReference type="HOGENOM" id="CLU_040267_0_1_10"/>
<dbReference type="OrthoDB" id="9803889at2"/>
<dbReference type="GO" id="GO:0005737">
    <property type="term" value="C:cytoplasm"/>
    <property type="evidence" value="ECO:0007669"/>
    <property type="project" value="UniProtKB-SubCell"/>
</dbReference>
<dbReference type="GO" id="GO:0005524">
    <property type="term" value="F:ATP binding"/>
    <property type="evidence" value="ECO:0007669"/>
    <property type="project" value="UniProtKB-UniRule"/>
</dbReference>
<dbReference type="GO" id="GO:0003697">
    <property type="term" value="F:single-stranded DNA binding"/>
    <property type="evidence" value="ECO:0007669"/>
    <property type="project" value="UniProtKB-UniRule"/>
</dbReference>
<dbReference type="GO" id="GO:0006260">
    <property type="term" value="P:DNA replication"/>
    <property type="evidence" value="ECO:0007669"/>
    <property type="project" value="UniProtKB-UniRule"/>
</dbReference>
<dbReference type="GO" id="GO:0000731">
    <property type="term" value="P:DNA synthesis involved in DNA repair"/>
    <property type="evidence" value="ECO:0007669"/>
    <property type="project" value="TreeGrafter"/>
</dbReference>
<dbReference type="GO" id="GO:0006302">
    <property type="term" value="P:double-strand break repair"/>
    <property type="evidence" value="ECO:0007669"/>
    <property type="project" value="TreeGrafter"/>
</dbReference>
<dbReference type="GO" id="GO:0009432">
    <property type="term" value="P:SOS response"/>
    <property type="evidence" value="ECO:0007669"/>
    <property type="project" value="UniProtKB-UniRule"/>
</dbReference>
<dbReference type="Gene3D" id="3.40.50.300">
    <property type="entry name" value="P-loop containing nucleotide triphosphate hydrolases"/>
    <property type="match status" value="1"/>
</dbReference>
<dbReference type="Gene3D" id="1.20.1050.90">
    <property type="entry name" value="RecF/RecN/SMC, N-terminal domain"/>
    <property type="match status" value="1"/>
</dbReference>
<dbReference type="HAMAP" id="MF_00365">
    <property type="entry name" value="RecF"/>
    <property type="match status" value="1"/>
</dbReference>
<dbReference type="InterPro" id="IPR001238">
    <property type="entry name" value="DNA-binding_RecF"/>
</dbReference>
<dbReference type="InterPro" id="IPR018078">
    <property type="entry name" value="DNA-binding_RecF_CS"/>
</dbReference>
<dbReference type="InterPro" id="IPR027417">
    <property type="entry name" value="P-loop_NTPase"/>
</dbReference>
<dbReference type="InterPro" id="IPR003395">
    <property type="entry name" value="RecF/RecN/SMC_N"/>
</dbReference>
<dbReference type="InterPro" id="IPR042174">
    <property type="entry name" value="RecF_2"/>
</dbReference>
<dbReference type="NCBIfam" id="TIGR00611">
    <property type="entry name" value="recf"/>
    <property type="match status" value="1"/>
</dbReference>
<dbReference type="PANTHER" id="PTHR32182">
    <property type="entry name" value="DNA REPLICATION AND REPAIR PROTEIN RECF"/>
    <property type="match status" value="1"/>
</dbReference>
<dbReference type="PANTHER" id="PTHR32182:SF0">
    <property type="entry name" value="DNA REPLICATION AND REPAIR PROTEIN RECF"/>
    <property type="match status" value="1"/>
</dbReference>
<dbReference type="Pfam" id="PF02463">
    <property type="entry name" value="SMC_N"/>
    <property type="match status" value="1"/>
</dbReference>
<dbReference type="SUPFAM" id="SSF52540">
    <property type="entry name" value="P-loop containing nucleoside triphosphate hydrolases"/>
    <property type="match status" value="1"/>
</dbReference>
<dbReference type="PROSITE" id="PS00617">
    <property type="entry name" value="RECF_1"/>
    <property type="match status" value="1"/>
</dbReference>
<dbReference type="PROSITE" id="PS00618">
    <property type="entry name" value="RECF_2"/>
    <property type="match status" value="1"/>
</dbReference>
<proteinExistence type="inferred from homology"/>
<protein>
    <recommendedName>
        <fullName evidence="1">DNA replication and repair protein RecF</fullName>
    </recommendedName>
</protein>
<accession>B3EJI1</accession>
<keyword id="KW-0067">ATP-binding</keyword>
<keyword id="KW-0963">Cytoplasm</keyword>
<keyword id="KW-0227">DNA damage</keyword>
<keyword id="KW-0234">DNA repair</keyword>
<keyword id="KW-0235">DNA replication</keyword>
<keyword id="KW-0238">DNA-binding</keyword>
<keyword id="KW-0547">Nucleotide-binding</keyword>
<keyword id="KW-0742">SOS response</keyword>
<reference key="1">
    <citation type="submission" date="2008-06" db="EMBL/GenBank/DDBJ databases">
        <title>Complete sequence of Chlorobium phaeobacteroides BS1.</title>
        <authorList>
            <consortium name="US DOE Joint Genome Institute"/>
            <person name="Lucas S."/>
            <person name="Copeland A."/>
            <person name="Lapidus A."/>
            <person name="Glavina del Rio T."/>
            <person name="Dalin E."/>
            <person name="Tice H."/>
            <person name="Bruce D."/>
            <person name="Goodwin L."/>
            <person name="Pitluck S."/>
            <person name="Schmutz J."/>
            <person name="Larimer F."/>
            <person name="Land M."/>
            <person name="Hauser L."/>
            <person name="Kyrpides N."/>
            <person name="Ovchinnikova G."/>
            <person name="Li T."/>
            <person name="Liu Z."/>
            <person name="Zhao F."/>
            <person name="Overmann J."/>
            <person name="Bryant D.A."/>
            <person name="Richardson P."/>
        </authorList>
    </citation>
    <scope>NUCLEOTIDE SEQUENCE [LARGE SCALE GENOMIC DNA]</scope>
    <source>
        <strain>BS1</strain>
    </source>
</reference>
<sequence>MRLQEIQLVNFRKHKELVFAPSEAITVVYGPNGSGKTNILEAVHYCTLARGLNRSLDRECLNFDAGYFLLQGTFADDRGIELSVKVSYEKNVEKKIFINSDELKKYSQLIGRIPCVTFSPMELSLVNGSPQERRRFMDNALSQTNKSYLDDLLQYRRVLQQRNTLLGAVNEKGMDRDSLEVWTEKLTQLACSIVSERLAFIERLFVYIEPVYEQLGLGEVPGISYRSAAGRHANEIAPEELFSFMMQRFREIEHQEIFRKQSLAGPHRDDLVFRFNDTDVKKYASQGQLRTFLIAVKLALHTLVSDTTGERPLFLLDDLFSELDGTRIEKILEQLEGAGQSIITATDRKDGSGVRSVSIEDLL</sequence>
<name>RECF_CHLPB</name>
<evidence type="ECO:0000255" key="1">
    <source>
        <dbReference type="HAMAP-Rule" id="MF_00365"/>
    </source>
</evidence>